<evidence type="ECO:0000255" key="1">
    <source>
        <dbReference type="HAMAP-Rule" id="MF_00008"/>
    </source>
</evidence>
<name>TYSY_BUCAP</name>
<feature type="chain" id="PRO_0000140945" description="Thymidylate synthase">
    <location>
        <begin position="1"/>
        <end position="264"/>
    </location>
</feature>
<feature type="active site" description="Nucleophile" evidence="1">
    <location>
        <position position="146"/>
    </location>
</feature>
<feature type="binding site" description="in other chain" evidence="1">
    <location>
        <position position="21"/>
    </location>
    <ligand>
        <name>dUMP</name>
        <dbReference type="ChEBI" id="CHEBI:246422"/>
        <note>ligand shared between dimeric partners</note>
    </ligand>
</feature>
<feature type="binding site" evidence="1">
    <location>
        <position position="51"/>
    </location>
    <ligand>
        <name>(6R)-5,10-methylene-5,6,7,8-tetrahydrofolate</name>
        <dbReference type="ChEBI" id="CHEBI:15636"/>
    </ligand>
</feature>
<feature type="binding site" evidence="1">
    <location>
        <begin position="126"/>
        <end position="127"/>
    </location>
    <ligand>
        <name>dUMP</name>
        <dbReference type="ChEBI" id="CHEBI:246422"/>
        <note>ligand shared between dimeric partners</note>
    </ligand>
</feature>
<feature type="binding site" description="in other chain" evidence="1">
    <location>
        <begin position="166"/>
        <end position="169"/>
    </location>
    <ligand>
        <name>dUMP</name>
        <dbReference type="ChEBI" id="CHEBI:246422"/>
        <note>ligand shared between dimeric partners</note>
    </ligand>
</feature>
<feature type="binding site" evidence="1">
    <location>
        <position position="169"/>
    </location>
    <ligand>
        <name>(6R)-5,10-methylene-5,6,7,8-tetrahydrofolate</name>
        <dbReference type="ChEBI" id="CHEBI:15636"/>
    </ligand>
</feature>
<feature type="binding site" description="in other chain" evidence="1">
    <location>
        <position position="177"/>
    </location>
    <ligand>
        <name>dUMP</name>
        <dbReference type="ChEBI" id="CHEBI:246422"/>
        <note>ligand shared between dimeric partners</note>
    </ligand>
</feature>
<feature type="binding site" description="in other chain" evidence="1">
    <location>
        <begin position="207"/>
        <end position="209"/>
    </location>
    <ligand>
        <name>dUMP</name>
        <dbReference type="ChEBI" id="CHEBI:246422"/>
        <note>ligand shared between dimeric partners</note>
    </ligand>
</feature>
<feature type="binding site" evidence="1">
    <location>
        <position position="263"/>
    </location>
    <ligand>
        <name>(6R)-5,10-methylene-5,6,7,8-tetrahydrofolate</name>
        <dbReference type="ChEBI" id="CHEBI:15636"/>
    </ligand>
</feature>
<reference key="1">
    <citation type="journal article" date="2002" name="Science">
        <title>50 million years of genomic stasis in endosymbiotic bacteria.</title>
        <authorList>
            <person name="Tamas I."/>
            <person name="Klasson L."/>
            <person name="Canbaeck B."/>
            <person name="Naeslund A.K."/>
            <person name="Eriksson A.-S."/>
            <person name="Wernegreen J.J."/>
            <person name="Sandstroem J.P."/>
            <person name="Moran N.A."/>
            <person name="Andersson S.G.E."/>
        </authorList>
    </citation>
    <scope>NUCLEOTIDE SEQUENCE [LARGE SCALE GENOMIC DNA]</scope>
    <source>
        <strain>Sg</strain>
    </source>
</reference>
<protein>
    <recommendedName>
        <fullName evidence="1">Thymidylate synthase</fullName>
        <shortName evidence="1">TS</shortName>
        <shortName evidence="1">TSase</shortName>
        <ecNumber evidence="1">2.1.1.45</ecNumber>
    </recommendedName>
</protein>
<accession>Q8K9C3</accession>
<dbReference type="EC" id="2.1.1.45" evidence="1"/>
<dbReference type="EMBL" id="AE013218">
    <property type="protein sequence ID" value="AAM67968.1"/>
    <property type="molecule type" value="Genomic_DNA"/>
</dbReference>
<dbReference type="RefSeq" id="WP_011053935.1">
    <property type="nucleotide sequence ID" value="NC_004061.1"/>
</dbReference>
<dbReference type="SMR" id="Q8K9C3"/>
<dbReference type="STRING" id="198804.BUsg_425"/>
<dbReference type="GeneID" id="93003897"/>
<dbReference type="KEGG" id="bas:BUsg_425"/>
<dbReference type="eggNOG" id="COG0207">
    <property type="taxonomic scope" value="Bacteria"/>
</dbReference>
<dbReference type="HOGENOM" id="CLU_021669_0_0_6"/>
<dbReference type="UniPathway" id="UPA00575"/>
<dbReference type="Proteomes" id="UP000000416">
    <property type="component" value="Chromosome"/>
</dbReference>
<dbReference type="GO" id="GO:0005829">
    <property type="term" value="C:cytosol"/>
    <property type="evidence" value="ECO:0007669"/>
    <property type="project" value="TreeGrafter"/>
</dbReference>
<dbReference type="GO" id="GO:0004799">
    <property type="term" value="F:thymidylate synthase activity"/>
    <property type="evidence" value="ECO:0007669"/>
    <property type="project" value="UniProtKB-UniRule"/>
</dbReference>
<dbReference type="GO" id="GO:0006231">
    <property type="term" value="P:dTMP biosynthetic process"/>
    <property type="evidence" value="ECO:0007669"/>
    <property type="project" value="UniProtKB-UniRule"/>
</dbReference>
<dbReference type="GO" id="GO:0006235">
    <property type="term" value="P:dTTP biosynthetic process"/>
    <property type="evidence" value="ECO:0007669"/>
    <property type="project" value="UniProtKB-UniRule"/>
</dbReference>
<dbReference type="GO" id="GO:0032259">
    <property type="term" value="P:methylation"/>
    <property type="evidence" value="ECO:0007669"/>
    <property type="project" value="UniProtKB-KW"/>
</dbReference>
<dbReference type="CDD" id="cd00351">
    <property type="entry name" value="TS_Pyrimidine_HMase"/>
    <property type="match status" value="1"/>
</dbReference>
<dbReference type="FunFam" id="3.30.572.10:FF:000013">
    <property type="entry name" value="Thymidylate synthase"/>
    <property type="match status" value="1"/>
</dbReference>
<dbReference type="Gene3D" id="3.30.572.10">
    <property type="entry name" value="Thymidylate synthase/dCMP hydroxymethylase domain"/>
    <property type="match status" value="1"/>
</dbReference>
<dbReference type="HAMAP" id="MF_00008">
    <property type="entry name" value="Thymidy_synth_bact"/>
    <property type="match status" value="1"/>
</dbReference>
<dbReference type="InterPro" id="IPR045097">
    <property type="entry name" value="Thymidate_synth/dCMP_Mease"/>
</dbReference>
<dbReference type="InterPro" id="IPR023451">
    <property type="entry name" value="Thymidate_synth/dCMP_Mease_dom"/>
</dbReference>
<dbReference type="InterPro" id="IPR036926">
    <property type="entry name" value="Thymidate_synth/dCMP_Mease_sf"/>
</dbReference>
<dbReference type="InterPro" id="IPR000398">
    <property type="entry name" value="Thymidylate_synthase"/>
</dbReference>
<dbReference type="InterPro" id="IPR020940">
    <property type="entry name" value="Thymidylate_synthase_AS"/>
</dbReference>
<dbReference type="NCBIfam" id="NF002497">
    <property type="entry name" value="PRK01827.1-3"/>
    <property type="match status" value="1"/>
</dbReference>
<dbReference type="NCBIfam" id="NF002499">
    <property type="entry name" value="PRK01827.1-5"/>
    <property type="match status" value="1"/>
</dbReference>
<dbReference type="NCBIfam" id="TIGR03284">
    <property type="entry name" value="thym_sym"/>
    <property type="match status" value="2"/>
</dbReference>
<dbReference type="PANTHER" id="PTHR11548:SF9">
    <property type="entry name" value="THYMIDYLATE SYNTHASE"/>
    <property type="match status" value="1"/>
</dbReference>
<dbReference type="PANTHER" id="PTHR11548">
    <property type="entry name" value="THYMIDYLATE SYNTHASE 1"/>
    <property type="match status" value="1"/>
</dbReference>
<dbReference type="Pfam" id="PF00303">
    <property type="entry name" value="Thymidylat_synt"/>
    <property type="match status" value="1"/>
</dbReference>
<dbReference type="PRINTS" id="PR00108">
    <property type="entry name" value="THYMDSNTHASE"/>
</dbReference>
<dbReference type="SUPFAM" id="SSF55831">
    <property type="entry name" value="Thymidylate synthase/dCMP hydroxymethylase"/>
    <property type="match status" value="1"/>
</dbReference>
<dbReference type="PROSITE" id="PS00091">
    <property type="entry name" value="THYMIDYLATE_SYNTHASE"/>
    <property type="match status" value="1"/>
</dbReference>
<keyword id="KW-0963">Cytoplasm</keyword>
<keyword id="KW-0489">Methyltransferase</keyword>
<keyword id="KW-0545">Nucleotide biosynthesis</keyword>
<keyword id="KW-0808">Transferase</keyword>
<gene>
    <name evidence="1" type="primary">thyA</name>
    <name type="ordered locus">BUsg_425</name>
</gene>
<comment type="function">
    <text evidence="1">Catalyzes the reductive methylation of 2'-deoxyuridine-5'-monophosphate (dUMP) to 2'-deoxythymidine-5'-monophosphate (dTMP) while utilizing 5,10-methylenetetrahydrofolate (mTHF) as the methyl donor and reductant in the reaction, yielding dihydrofolate (DHF) as a by-product. This enzymatic reaction provides an intracellular de novo source of dTMP, an essential precursor for DNA biosynthesis.</text>
</comment>
<comment type="catalytic activity">
    <reaction evidence="1">
        <text>dUMP + (6R)-5,10-methylene-5,6,7,8-tetrahydrofolate = 7,8-dihydrofolate + dTMP</text>
        <dbReference type="Rhea" id="RHEA:12104"/>
        <dbReference type="ChEBI" id="CHEBI:15636"/>
        <dbReference type="ChEBI" id="CHEBI:57451"/>
        <dbReference type="ChEBI" id="CHEBI:63528"/>
        <dbReference type="ChEBI" id="CHEBI:246422"/>
        <dbReference type="EC" id="2.1.1.45"/>
    </reaction>
</comment>
<comment type="pathway">
    <text evidence="1">Pyrimidine metabolism; dTTP biosynthesis.</text>
</comment>
<comment type="subunit">
    <text evidence="1">Homodimer.</text>
</comment>
<comment type="subcellular location">
    <subcellularLocation>
        <location evidence="1">Cytoplasm</location>
    </subcellularLocation>
</comment>
<comment type="similarity">
    <text evidence="1">Belongs to the thymidylate synthase family. Bacterial-type ThyA subfamily.</text>
</comment>
<proteinExistence type="inferred from homology"/>
<sequence length="264" mass="30716">MKQYLDLIKKIIKNGNSKKDRTGTGTLSIFGHHMKFDLKKGFPLITTKKCHIPSIIHELLWFLRGETNIKYLNENKISIWDNWADKFGDLGPIYGKQWRSWDTSNGKKIDQIKNVLKQIKEDPDSRRILVSSWNVGEIDKMSLAPCHILFQFYVLKKKLSCQLYQRSCDVFLGLPFNIASYAILIHMIAQQCNLQVGEFLWTGGDVHLYKNHVELAKKQILRIPKKLPELIILKKPQSLFQYSFEDFKIVGYKPYSLIKGKISV</sequence>
<organism>
    <name type="scientific">Buchnera aphidicola subsp. Schizaphis graminum (strain Sg)</name>
    <dbReference type="NCBI Taxonomy" id="198804"/>
    <lineage>
        <taxon>Bacteria</taxon>
        <taxon>Pseudomonadati</taxon>
        <taxon>Pseudomonadota</taxon>
        <taxon>Gammaproteobacteria</taxon>
        <taxon>Enterobacterales</taxon>
        <taxon>Erwiniaceae</taxon>
        <taxon>Buchnera</taxon>
    </lineage>
</organism>